<reference key="1">
    <citation type="journal article" date="2010" name="BMC Genomics">
        <title>A genomic perspective on the potential of Actinobacillus succinogenes for industrial succinate production.</title>
        <authorList>
            <person name="McKinlay J.B."/>
            <person name="Laivenieks M."/>
            <person name="Schindler B.D."/>
            <person name="McKinlay A.A."/>
            <person name="Siddaramappa S."/>
            <person name="Challacombe J.F."/>
            <person name="Lowry S.R."/>
            <person name="Clum A."/>
            <person name="Lapidus A.L."/>
            <person name="Burkhart K.B."/>
            <person name="Harkins V."/>
            <person name="Vieille C."/>
        </authorList>
    </citation>
    <scope>NUCLEOTIDE SEQUENCE [LARGE SCALE GENOMIC DNA]</scope>
    <source>
        <strain>ATCC 55618 / DSM 22257 / CCUG 43843 / 130Z</strain>
    </source>
</reference>
<comment type="function">
    <text evidence="1">Catalyzes the phosphorylation of the hydroxyl group of 4-methyl-5-beta-hydroxyethylthiazole (THZ).</text>
</comment>
<comment type="catalytic activity">
    <reaction evidence="1">
        <text>5-(2-hydroxyethyl)-4-methylthiazole + ATP = 4-methyl-5-(2-phosphooxyethyl)-thiazole + ADP + H(+)</text>
        <dbReference type="Rhea" id="RHEA:24212"/>
        <dbReference type="ChEBI" id="CHEBI:15378"/>
        <dbReference type="ChEBI" id="CHEBI:17957"/>
        <dbReference type="ChEBI" id="CHEBI:30616"/>
        <dbReference type="ChEBI" id="CHEBI:58296"/>
        <dbReference type="ChEBI" id="CHEBI:456216"/>
        <dbReference type="EC" id="2.7.1.50"/>
    </reaction>
</comment>
<comment type="cofactor">
    <cofactor evidence="1">
        <name>Mg(2+)</name>
        <dbReference type="ChEBI" id="CHEBI:18420"/>
    </cofactor>
</comment>
<comment type="pathway">
    <text evidence="1">Cofactor biosynthesis; thiamine diphosphate biosynthesis; 4-methyl-5-(2-phosphoethyl)-thiazole from 5-(2-hydroxyethyl)-4-methylthiazole: step 1/1.</text>
</comment>
<comment type="similarity">
    <text evidence="1">Belongs to the Thz kinase family.</text>
</comment>
<name>THIM_ACTSZ</name>
<sequence>MQFRYLSLVRQQAPLEHCITNIVVTNFSANGLLALGASPFMSAMPQEVTEIQNFAQALLINIGTLNQSDVEAMLIAGKAANRTGVPVVLDPVGAGATLFRRKIVEQFLAEINFAVIRGNAAEIGFLAGTDWQGKGVDAGTGADSENLSRLAQSVAQKYRCVVALSGETDFISDGLKTYQICNGTRMLPKVTGSGCLLGAVIAAFLGVSPPQDYFSACTEACTVYAVAGELAAQGLSNEYGSFAMNFINQLGAIHETRLADKARVLAQHE</sequence>
<accession>A6VPG7</accession>
<dbReference type="EC" id="2.7.1.50" evidence="1"/>
<dbReference type="EMBL" id="CP000746">
    <property type="protein sequence ID" value="ABR74864.1"/>
    <property type="molecule type" value="Genomic_DNA"/>
</dbReference>
<dbReference type="RefSeq" id="WP_012073241.1">
    <property type="nucleotide sequence ID" value="NC_009655.1"/>
</dbReference>
<dbReference type="SMR" id="A6VPG7"/>
<dbReference type="STRING" id="339671.Asuc_1506"/>
<dbReference type="KEGG" id="asu:Asuc_1506"/>
<dbReference type="eggNOG" id="COG2145">
    <property type="taxonomic scope" value="Bacteria"/>
</dbReference>
<dbReference type="HOGENOM" id="CLU_019943_0_1_6"/>
<dbReference type="OrthoDB" id="8909021at2"/>
<dbReference type="UniPathway" id="UPA00060">
    <property type="reaction ID" value="UER00139"/>
</dbReference>
<dbReference type="Proteomes" id="UP000001114">
    <property type="component" value="Chromosome"/>
</dbReference>
<dbReference type="GO" id="GO:0005524">
    <property type="term" value="F:ATP binding"/>
    <property type="evidence" value="ECO:0007669"/>
    <property type="project" value="UniProtKB-UniRule"/>
</dbReference>
<dbReference type="GO" id="GO:0004417">
    <property type="term" value="F:hydroxyethylthiazole kinase activity"/>
    <property type="evidence" value="ECO:0007669"/>
    <property type="project" value="UniProtKB-UniRule"/>
</dbReference>
<dbReference type="GO" id="GO:0000287">
    <property type="term" value="F:magnesium ion binding"/>
    <property type="evidence" value="ECO:0007669"/>
    <property type="project" value="UniProtKB-UniRule"/>
</dbReference>
<dbReference type="GO" id="GO:0009228">
    <property type="term" value="P:thiamine biosynthetic process"/>
    <property type="evidence" value="ECO:0007669"/>
    <property type="project" value="UniProtKB-KW"/>
</dbReference>
<dbReference type="GO" id="GO:0009229">
    <property type="term" value="P:thiamine diphosphate biosynthetic process"/>
    <property type="evidence" value="ECO:0007669"/>
    <property type="project" value="UniProtKB-UniRule"/>
</dbReference>
<dbReference type="CDD" id="cd01170">
    <property type="entry name" value="THZ_kinase"/>
    <property type="match status" value="1"/>
</dbReference>
<dbReference type="Gene3D" id="3.40.1190.20">
    <property type="match status" value="1"/>
</dbReference>
<dbReference type="HAMAP" id="MF_00228">
    <property type="entry name" value="Thz_kinase"/>
    <property type="match status" value="1"/>
</dbReference>
<dbReference type="InterPro" id="IPR000417">
    <property type="entry name" value="Hyethyz_kinase"/>
</dbReference>
<dbReference type="InterPro" id="IPR029056">
    <property type="entry name" value="Ribokinase-like"/>
</dbReference>
<dbReference type="NCBIfam" id="NF006830">
    <property type="entry name" value="PRK09355.1"/>
    <property type="match status" value="1"/>
</dbReference>
<dbReference type="NCBIfam" id="TIGR00694">
    <property type="entry name" value="thiM"/>
    <property type="match status" value="1"/>
</dbReference>
<dbReference type="Pfam" id="PF02110">
    <property type="entry name" value="HK"/>
    <property type="match status" value="1"/>
</dbReference>
<dbReference type="PIRSF" id="PIRSF000513">
    <property type="entry name" value="Thz_kinase"/>
    <property type="match status" value="1"/>
</dbReference>
<dbReference type="PRINTS" id="PR01099">
    <property type="entry name" value="HYETHTZKNASE"/>
</dbReference>
<dbReference type="SUPFAM" id="SSF53613">
    <property type="entry name" value="Ribokinase-like"/>
    <property type="match status" value="1"/>
</dbReference>
<gene>
    <name evidence="1" type="primary">thiM</name>
    <name type="ordered locus">Asuc_1506</name>
</gene>
<keyword id="KW-0067">ATP-binding</keyword>
<keyword id="KW-0418">Kinase</keyword>
<keyword id="KW-0460">Magnesium</keyword>
<keyword id="KW-0479">Metal-binding</keyword>
<keyword id="KW-0547">Nucleotide-binding</keyword>
<keyword id="KW-1185">Reference proteome</keyword>
<keyword id="KW-0784">Thiamine biosynthesis</keyword>
<keyword id="KW-0808">Transferase</keyword>
<feature type="chain" id="PRO_0000336544" description="Hydroxyethylthiazole kinase">
    <location>
        <begin position="1"/>
        <end position="269"/>
    </location>
</feature>
<feature type="binding site" evidence="1">
    <location>
        <position position="41"/>
    </location>
    <ligand>
        <name>substrate</name>
    </ligand>
</feature>
<feature type="binding site" evidence="1">
    <location>
        <position position="117"/>
    </location>
    <ligand>
        <name>ATP</name>
        <dbReference type="ChEBI" id="CHEBI:30616"/>
    </ligand>
</feature>
<feature type="binding site" evidence="1">
    <location>
        <position position="165"/>
    </location>
    <ligand>
        <name>ATP</name>
        <dbReference type="ChEBI" id="CHEBI:30616"/>
    </ligand>
</feature>
<feature type="binding site" evidence="1">
    <location>
        <position position="192"/>
    </location>
    <ligand>
        <name>substrate</name>
    </ligand>
</feature>
<organism>
    <name type="scientific">Actinobacillus succinogenes (strain ATCC 55618 / DSM 22257 / CCUG 43843 / 130Z)</name>
    <dbReference type="NCBI Taxonomy" id="339671"/>
    <lineage>
        <taxon>Bacteria</taxon>
        <taxon>Pseudomonadati</taxon>
        <taxon>Pseudomonadota</taxon>
        <taxon>Gammaproteobacteria</taxon>
        <taxon>Pasteurellales</taxon>
        <taxon>Pasteurellaceae</taxon>
        <taxon>Actinobacillus</taxon>
    </lineage>
</organism>
<protein>
    <recommendedName>
        <fullName evidence="1">Hydroxyethylthiazole kinase</fullName>
        <ecNumber evidence="1">2.7.1.50</ecNumber>
    </recommendedName>
    <alternativeName>
        <fullName evidence="1">4-methyl-5-beta-hydroxyethylthiazole kinase</fullName>
        <shortName evidence="1">TH kinase</shortName>
        <shortName evidence="1">Thz kinase</shortName>
    </alternativeName>
</protein>
<evidence type="ECO:0000255" key="1">
    <source>
        <dbReference type="HAMAP-Rule" id="MF_00228"/>
    </source>
</evidence>
<proteinExistence type="inferred from homology"/>